<proteinExistence type="inferred from homology"/>
<reference key="1">
    <citation type="journal article" date="2000" name="Mol. Microbiol.">
        <title>Spo0A directly controls the switch from acid to solvent production in solvent-forming clostridia.</title>
        <authorList>
            <person name="Ravagnani A."/>
            <person name="Jennert K.C."/>
            <person name="Steiner E."/>
            <person name="Grunberg R."/>
            <person name="Jefferies J.R."/>
            <person name="Wilkinson S.R."/>
            <person name="Young D.I."/>
            <person name="Tidswell E.C."/>
            <person name="Brown D.P."/>
            <person name="Youngman P.J."/>
            <person name="Morris J.G."/>
            <person name="Young M."/>
        </authorList>
    </citation>
    <scope>NUCLEOTIDE SEQUENCE [GENOMIC DNA]</scope>
</reference>
<reference key="2">
    <citation type="submission" date="2009-01" db="EMBL/GenBank/DDBJ databases">
        <title>Complete sequence of Clostridium cellulolyticum H10.</title>
        <authorList>
            <consortium name="US DOE Joint Genome Institute"/>
            <person name="Lucas S."/>
            <person name="Copeland A."/>
            <person name="Lapidus A."/>
            <person name="Glavina del Rio T."/>
            <person name="Dalin E."/>
            <person name="Tice H."/>
            <person name="Bruce D."/>
            <person name="Goodwin L."/>
            <person name="Pitluck S."/>
            <person name="Chertkov O."/>
            <person name="Saunders E."/>
            <person name="Brettin T."/>
            <person name="Detter J.C."/>
            <person name="Han C."/>
            <person name="Larimer F."/>
            <person name="Land M."/>
            <person name="Hauser L."/>
            <person name="Kyrpides N."/>
            <person name="Ivanova N."/>
            <person name="Zhou J."/>
            <person name="Richardson P."/>
        </authorList>
    </citation>
    <scope>NUCLEOTIDE SEQUENCE [LARGE SCALE GENOMIC DNA]</scope>
    <source>
        <strain>ATCC 35319 / DSM 5812 / JCM 6584 / H10</strain>
    </source>
</reference>
<gene>
    <name evidence="1" type="primary">glgC</name>
    <name type="ordered locus">Ccel_3401</name>
</gene>
<name>GLGC_RUMCH</name>
<organism>
    <name type="scientific">Ruminiclostridium cellulolyticum (strain ATCC 35319 / DSM 5812 / JCM 6584 / H10)</name>
    <name type="common">Clostridium cellulolyticum</name>
    <dbReference type="NCBI Taxonomy" id="394503"/>
    <lineage>
        <taxon>Bacteria</taxon>
        <taxon>Bacillati</taxon>
        <taxon>Bacillota</taxon>
        <taxon>Clostridia</taxon>
        <taxon>Eubacteriales</taxon>
        <taxon>Oscillospiraceae</taxon>
        <taxon>Ruminiclostridium</taxon>
    </lineage>
</organism>
<sequence>MIRKEMIAMLLAGGQGSRLGVLTKNVAKPAVLYGGKYRIIDFSLSNCTNSGIDTVGVLTQYQPLKLNAHIGIGKPWDMDRIDGGVTILSPYLKAEMGEWFKGTANAVYQNIQYIDKYSPHYVIILSGDHIYKMDYSKMLDFHKENHADATISVINVPYEEASRYGIMNCHENGKIYEFEEKPKNPKSTLASMGVYIFTWSTLREYLIKDNECSDSVNDFGKNIIPAMLGDGKSMWAYQYSGYWRDVGTIQAFWESNMDLVSRVPQFNLFDPEWRIYTPNPVKPAHYIASSACVKKSIIAEGCSVHGTVINSILFPGAYIEEGAVIQDSIIMSNSRVCKNAYINRSIISEQAIIGEKARLGEGPDVPNEYKPGIYDSGITVVGEKSSIPADAVIGKNVMIDIGASAVDFTSLNVQSGKSVFKGGVAE</sequence>
<evidence type="ECO:0000255" key="1">
    <source>
        <dbReference type="HAMAP-Rule" id="MF_00624"/>
    </source>
</evidence>
<evidence type="ECO:0000305" key="2"/>
<protein>
    <recommendedName>
        <fullName evidence="1">Glucose-1-phosphate adenylyltransferase</fullName>
        <ecNumber evidence="1">2.7.7.27</ecNumber>
    </recommendedName>
    <alternativeName>
        <fullName evidence="1">ADP-glucose pyrophosphorylase</fullName>
        <shortName evidence="1">ADPGlc PPase</shortName>
    </alternativeName>
    <alternativeName>
        <fullName evidence="1">ADP-glucose synthase</fullName>
    </alternativeName>
</protein>
<accession>Q9L385</accession>
<accession>B8I1Q4</accession>
<comment type="function">
    <text evidence="1">Involved in the biosynthesis of ADP-glucose, a building block required for the elongation reactions to produce glycogen. Catalyzes the reaction between ATP and alpha-D-glucose 1-phosphate (G1P) to produce pyrophosphate and ADP-Glc.</text>
</comment>
<comment type="catalytic activity">
    <reaction evidence="1">
        <text>alpha-D-glucose 1-phosphate + ATP + H(+) = ADP-alpha-D-glucose + diphosphate</text>
        <dbReference type="Rhea" id="RHEA:12120"/>
        <dbReference type="ChEBI" id="CHEBI:15378"/>
        <dbReference type="ChEBI" id="CHEBI:30616"/>
        <dbReference type="ChEBI" id="CHEBI:33019"/>
        <dbReference type="ChEBI" id="CHEBI:57498"/>
        <dbReference type="ChEBI" id="CHEBI:58601"/>
        <dbReference type="EC" id="2.7.7.27"/>
    </reaction>
</comment>
<comment type="pathway">
    <text evidence="1">Glycan biosynthesis; glycogen biosynthesis.</text>
</comment>
<comment type="subunit">
    <text evidence="1">Homotetramer.</text>
</comment>
<comment type="similarity">
    <text evidence="1">Belongs to the bacterial/plant glucose-1-phosphate adenylyltransferase family.</text>
</comment>
<keyword id="KW-0067">ATP-binding</keyword>
<keyword id="KW-0119">Carbohydrate metabolism</keyword>
<keyword id="KW-0320">Glycogen biosynthesis</keyword>
<keyword id="KW-0321">Glycogen metabolism</keyword>
<keyword id="KW-0547">Nucleotide-binding</keyword>
<keyword id="KW-0548">Nucleotidyltransferase</keyword>
<keyword id="KW-1185">Reference proteome</keyword>
<keyword id="KW-0808">Transferase</keyword>
<dbReference type="EC" id="2.7.7.27" evidence="1"/>
<dbReference type="EMBL" id="AJ277601">
    <property type="protein sequence ID" value="CAB89282.1"/>
    <property type="molecule type" value="Genomic_DNA"/>
</dbReference>
<dbReference type="EMBL" id="CP001348">
    <property type="protein sequence ID" value="ACL77689.1"/>
    <property type="molecule type" value="Genomic_DNA"/>
</dbReference>
<dbReference type="RefSeq" id="WP_015926741.1">
    <property type="nucleotide sequence ID" value="NC_011898.1"/>
</dbReference>
<dbReference type="SMR" id="Q9L385"/>
<dbReference type="STRING" id="394503.Ccel_3401"/>
<dbReference type="KEGG" id="cce:Ccel_3401"/>
<dbReference type="eggNOG" id="COG0448">
    <property type="taxonomic scope" value="Bacteria"/>
</dbReference>
<dbReference type="HOGENOM" id="CLU_029499_14_0_9"/>
<dbReference type="OrthoDB" id="9801810at2"/>
<dbReference type="UniPathway" id="UPA00164"/>
<dbReference type="Proteomes" id="UP000001349">
    <property type="component" value="Chromosome"/>
</dbReference>
<dbReference type="GO" id="GO:0005524">
    <property type="term" value="F:ATP binding"/>
    <property type="evidence" value="ECO:0007669"/>
    <property type="project" value="UniProtKB-KW"/>
</dbReference>
<dbReference type="GO" id="GO:0008878">
    <property type="term" value="F:glucose-1-phosphate adenylyltransferase activity"/>
    <property type="evidence" value="ECO:0007669"/>
    <property type="project" value="UniProtKB-UniRule"/>
</dbReference>
<dbReference type="GO" id="GO:0005978">
    <property type="term" value="P:glycogen biosynthetic process"/>
    <property type="evidence" value="ECO:0007669"/>
    <property type="project" value="UniProtKB-UniRule"/>
</dbReference>
<dbReference type="CDD" id="cd02508">
    <property type="entry name" value="ADP_Glucose_PP"/>
    <property type="match status" value="1"/>
</dbReference>
<dbReference type="CDD" id="cd04651">
    <property type="entry name" value="LbH_G1P_AT_C"/>
    <property type="match status" value="1"/>
</dbReference>
<dbReference type="Gene3D" id="2.160.10.10">
    <property type="entry name" value="Hexapeptide repeat proteins"/>
    <property type="match status" value="1"/>
</dbReference>
<dbReference type="Gene3D" id="3.90.550.10">
    <property type="entry name" value="Spore Coat Polysaccharide Biosynthesis Protein SpsA, Chain A"/>
    <property type="match status" value="1"/>
</dbReference>
<dbReference type="HAMAP" id="MF_00624">
    <property type="entry name" value="GlgC"/>
    <property type="match status" value="1"/>
</dbReference>
<dbReference type="InterPro" id="IPR011831">
    <property type="entry name" value="ADP-Glc_PPase"/>
</dbReference>
<dbReference type="InterPro" id="IPR005836">
    <property type="entry name" value="ADP_Glu_pyroP_CS"/>
</dbReference>
<dbReference type="InterPro" id="IPR023049">
    <property type="entry name" value="GlgC_bac"/>
</dbReference>
<dbReference type="InterPro" id="IPR056818">
    <property type="entry name" value="GlmU/GlgC-like_hexapep"/>
</dbReference>
<dbReference type="InterPro" id="IPR005835">
    <property type="entry name" value="NTP_transferase_dom"/>
</dbReference>
<dbReference type="InterPro" id="IPR029044">
    <property type="entry name" value="Nucleotide-diphossugar_trans"/>
</dbReference>
<dbReference type="InterPro" id="IPR011004">
    <property type="entry name" value="Trimer_LpxA-like_sf"/>
</dbReference>
<dbReference type="NCBIfam" id="TIGR02091">
    <property type="entry name" value="glgC"/>
    <property type="match status" value="1"/>
</dbReference>
<dbReference type="NCBIfam" id="NF003670">
    <property type="entry name" value="PRK05293.1"/>
    <property type="match status" value="1"/>
</dbReference>
<dbReference type="PANTHER" id="PTHR43523:SF2">
    <property type="entry name" value="GLUCOSE-1-PHOSPHATE ADENYLYLTRANSFERASE"/>
    <property type="match status" value="1"/>
</dbReference>
<dbReference type="PANTHER" id="PTHR43523">
    <property type="entry name" value="GLUCOSE-1-PHOSPHATE ADENYLYLTRANSFERASE-RELATED"/>
    <property type="match status" value="1"/>
</dbReference>
<dbReference type="Pfam" id="PF24894">
    <property type="entry name" value="Hexapep_GlmU"/>
    <property type="match status" value="1"/>
</dbReference>
<dbReference type="Pfam" id="PF00483">
    <property type="entry name" value="NTP_transferase"/>
    <property type="match status" value="1"/>
</dbReference>
<dbReference type="SUPFAM" id="SSF53448">
    <property type="entry name" value="Nucleotide-diphospho-sugar transferases"/>
    <property type="match status" value="1"/>
</dbReference>
<dbReference type="SUPFAM" id="SSF51161">
    <property type="entry name" value="Trimeric LpxA-like enzymes"/>
    <property type="match status" value="1"/>
</dbReference>
<dbReference type="PROSITE" id="PS00808">
    <property type="entry name" value="ADP_GLC_PYROPHOSPH_1"/>
    <property type="match status" value="1"/>
</dbReference>
<dbReference type="PROSITE" id="PS00809">
    <property type="entry name" value="ADP_GLC_PYROPHOSPH_2"/>
    <property type="match status" value="1"/>
</dbReference>
<dbReference type="PROSITE" id="PS00810">
    <property type="entry name" value="ADP_GLC_PYROPHOSPH_3"/>
    <property type="match status" value="1"/>
</dbReference>
<feature type="chain" id="PRO_0000195288" description="Glucose-1-phosphate adenylyltransferase">
    <location>
        <begin position="1"/>
        <end position="426"/>
    </location>
</feature>
<feature type="binding site" evidence="1">
    <location>
        <position position="165"/>
    </location>
    <ligand>
        <name>alpha-D-glucose 1-phosphate</name>
        <dbReference type="ChEBI" id="CHEBI:58601"/>
    </ligand>
</feature>
<feature type="binding site" evidence="1">
    <location>
        <begin position="180"/>
        <end position="181"/>
    </location>
    <ligand>
        <name>alpha-D-glucose 1-phosphate</name>
        <dbReference type="ChEBI" id="CHEBI:58601"/>
    </ligand>
</feature>
<feature type="binding site" evidence="1">
    <location>
        <position position="191"/>
    </location>
    <ligand>
        <name>alpha-D-glucose 1-phosphate</name>
        <dbReference type="ChEBI" id="CHEBI:58601"/>
    </ligand>
</feature>
<feature type="sequence conflict" description="In Ref. 1; CAB89282." evidence="2" ref="1">
    <original>D</original>
    <variation>E</variation>
    <location>
        <position position="82"/>
    </location>
</feature>
<feature type="sequence conflict" description="In Ref. 1; CAB89282." evidence="2" ref="1">
    <original>N</original>
    <variation>S</variation>
    <location>
        <position position="256"/>
    </location>
</feature>
<feature type="sequence conflict" description="In Ref. 1; CAB89282." evidence="2" ref="1">
    <original>A</original>
    <variation>P</variation>
    <location>
        <position position="391"/>
    </location>
</feature>